<protein>
    <recommendedName>
        <fullName>SRR1-like protein</fullName>
    </recommendedName>
    <alternativeName>
        <fullName>SRR1 domain-containing protein</fullName>
    </alternativeName>
</protein>
<proteinExistence type="evidence at transcript level"/>
<keyword id="KW-0025">Alternative splicing</keyword>
<keyword id="KW-0090">Biological rhythms</keyword>
<keyword id="KW-0963">Cytoplasm</keyword>
<keyword id="KW-0350">Heme biosynthesis</keyword>
<keyword id="KW-1185">Reference proteome</keyword>
<feature type="chain" id="PRO_0000186124" description="SRR1-like protein">
    <location>
        <begin position="1"/>
        <end position="249"/>
    </location>
</feature>
<feature type="region of interest" description="Disordered" evidence="1">
    <location>
        <begin position="1"/>
        <end position="40"/>
    </location>
</feature>
<feature type="compositionally biased region" description="Basic residues" evidence="1">
    <location>
        <begin position="14"/>
        <end position="25"/>
    </location>
</feature>
<feature type="compositionally biased region" description="Basic and acidic residues" evidence="1">
    <location>
        <begin position="26"/>
        <end position="40"/>
    </location>
</feature>
<feature type="splice variant" id="VSP_038445" description="In isoform 2." evidence="3">
    <location>
        <position position="249"/>
    </location>
</feature>
<feature type="sequence conflict" description="In Ref. 3; BAB28374." evidence="4" ref="3">
    <original>E</original>
    <variation>D</variation>
    <location>
        <position position="36"/>
    </location>
</feature>
<comment type="function">
    <text evidence="2">Plays a role in the regulation of heme biosynthesis and in the regulation of the expression of core clock genes.</text>
</comment>
<comment type="subcellular location">
    <subcellularLocation>
        <location evidence="2">Cytoplasm</location>
    </subcellularLocation>
    <text evidence="2">Also found in intracellular organelles.</text>
</comment>
<comment type="alternative products">
    <event type="alternative splicing"/>
    <isoform>
        <id>Q8K2M3-1</id>
        <name>1</name>
        <sequence type="displayed"/>
    </isoform>
    <isoform>
        <id>Q8K2M3-2</id>
        <name>2</name>
        <sequence type="described" ref="VSP_038445"/>
    </isoform>
</comment>
<comment type="induction">
    <text evidence="2">Up-regulated by hemin and 5-aminolevulinic acid.</text>
</comment>
<comment type="similarity">
    <text evidence="4">Belongs to the SRR1 family.</text>
</comment>
<dbReference type="EMBL" id="AC123848">
    <property type="status" value="NOT_ANNOTATED_CDS"/>
    <property type="molecule type" value="Genomic_DNA"/>
</dbReference>
<dbReference type="EMBL" id="BC030678">
    <property type="protein sequence ID" value="AAH30678.1"/>
    <property type="molecule type" value="mRNA"/>
</dbReference>
<dbReference type="EMBL" id="BC125007">
    <property type="status" value="NOT_ANNOTATED_CDS"/>
    <property type="molecule type" value="mRNA"/>
</dbReference>
<dbReference type="EMBL" id="AK012640">
    <property type="protein sequence ID" value="BAB28374.1"/>
    <property type="molecule type" value="mRNA"/>
</dbReference>
<dbReference type="CCDS" id="CCDS51614.1">
    <molecule id="Q8K2M3-1"/>
</dbReference>
<dbReference type="RefSeq" id="NP_081599.2">
    <molecule id="Q8K2M3-1"/>
    <property type="nucleotide sequence ID" value="NM_027323.2"/>
</dbReference>
<dbReference type="FunCoup" id="Q8K2M3">
    <property type="interactions" value="3311"/>
</dbReference>
<dbReference type="STRING" id="10090.ENSMUSP00000031289"/>
<dbReference type="PhosphoSitePlus" id="Q8K2M3"/>
<dbReference type="PaxDb" id="10090-ENSMUSP00000031289"/>
<dbReference type="ProteomicsDB" id="262695">
    <molecule id="Q8K2M3-1"/>
</dbReference>
<dbReference type="ProteomicsDB" id="262696">
    <molecule id="Q8K2M3-2"/>
</dbReference>
<dbReference type="Antibodypedia" id="287">
    <property type="antibodies" value="80 antibodies from 17 providers"/>
</dbReference>
<dbReference type="Ensembl" id="ENSMUST00000031289.7">
    <molecule id="Q8K2M3-1"/>
    <property type="protein sequence ID" value="ENSMUSP00000031289.7"/>
    <property type="gene ID" value="ENSMUSG00000029346.13"/>
</dbReference>
<dbReference type="GeneID" id="70118"/>
<dbReference type="KEGG" id="mmu:70118"/>
<dbReference type="UCSC" id="uc008ysz.2">
    <molecule id="Q8K2M3-1"/>
    <property type="organism name" value="mouse"/>
</dbReference>
<dbReference type="AGR" id="MGI:1917368"/>
<dbReference type="CTD" id="402055"/>
<dbReference type="MGI" id="MGI:1917368">
    <property type="gene designation" value="Srrd"/>
</dbReference>
<dbReference type="VEuPathDB" id="HostDB:ENSMUSG00000029346"/>
<dbReference type="eggNOG" id="KOG3131">
    <property type="taxonomic scope" value="Eukaryota"/>
</dbReference>
<dbReference type="GeneTree" id="ENSGT00390000003948"/>
<dbReference type="HOGENOM" id="CLU_062516_0_1_1"/>
<dbReference type="InParanoid" id="Q8K2M3"/>
<dbReference type="OMA" id="WKCVCYG"/>
<dbReference type="OrthoDB" id="551431at2759"/>
<dbReference type="PhylomeDB" id="Q8K2M3"/>
<dbReference type="TreeFam" id="TF323595"/>
<dbReference type="BioGRID-ORCS" id="70118">
    <property type="hits" value="19 hits in 79 CRISPR screens"/>
</dbReference>
<dbReference type="ChiTaRS" id="Srrd">
    <property type="organism name" value="mouse"/>
</dbReference>
<dbReference type="PRO" id="PR:Q8K2M3"/>
<dbReference type="Proteomes" id="UP000000589">
    <property type="component" value="Chromosome 5"/>
</dbReference>
<dbReference type="RNAct" id="Q8K2M3">
    <property type="molecule type" value="protein"/>
</dbReference>
<dbReference type="Bgee" id="ENSMUSG00000029346">
    <property type="expression patterns" value="Expressed in internal carotid artery and 205 other cell types or tissues"/>
</dbReference>
<dbReference type="ExpressionAtlas" id="Q8K2M3">
    <property type="expression patterns" value="baseline and differential"/>
</dbReference>
<dbReference type="GO" id="GO:0005737">
    <property type="term" value="C:cytoplasm"/>
    <property type="evidence" value="ECO:0000314"/>
    <property type="project" value="UniProtKB"/>
</dbReference>
<dbReference type="GO" id="GO:0006783">
    <property type="term" value="P:heme biosynthetic process"/>
    <property type="evidence" value="ECO:0007669"/>
    <property type="project" value="UniProtKB-KW"/>
</dbReference>
<dbReference type="GO" id="GO:0042752">
    <property type="term" value="P:regulation of circadian rhythm"/>
    <property type="evidence" value="ECO:0000315"/>
    <property type="project" value="UniProtKB"/>
</dbReference>
<dbReference type="GO" id="GO:0070453">
    <property type="term" value="P:regulation of heme biosynthetic process"/>
    <property type="evidence" value="ECO:0000315"/>
    <property type="project" value="UniProtKB"/>
</dbReference>
<dbReference type="GO" id="GO:0048511">
    <property type="term" value="P:rhythmic process"/>
    <property type="evidence" value="ECO:0007669"/>
    <property type="project" value="UniProtKB-KW"/>
</dbReference>
<dbReference type="InterPro" id="IPR012942">
    <property type="entry name" value="SRR1-like"/>
</dbReference>
<dbReference type="InterPro" id="IPR040044">
    <property type="entry name" value="SRR1L"/>
</dbReference>
<dbReference type="PANTHER" id="PTHR28626">
    <property type="entry name" value="SRR1-LIKE PROTEIN"/>
    <property type="match status" value="1"/>
</dbReference>
<dbReference type="PANTHER" id="PTHR28626:SF3">
    <property type="entry name" value="SRR1-LIKE PROTEIN"/>
    <property type="match status" value="1"/>
</dbReference>
<dbReference type="Pfam" id="PF07985">
    <property type="entry name" value="SRR1"/>
    <property type="match status" value="1"/>
</dbReference>
<organism>
    <name type="scientific">Mus musculus</name>
    <name type="common">Mouse</name>
    <dbReference type="NCBI Taxonomy" id="10090"/>
    <lineage>
        <taxon>Eukaryota</taxon>
        <taxon>Metazoa</taxon>
        <taxon>Chordata</taxon>
        <taxon>Craniata</taxon>
        <taxon>Vertebrata</taxon>
        <taxon>Euteleostomi</taxon>
        <taxon>Mammalia</taxon>
        <taxon>Eutheria</taxon>
        <taxon>Euarchontoglires</taxon>
        <taxon>Glires</taxon>
        <taxon>Rodentia</taxon>
        <taxon>Myomorpha</taxon>
        <taxon>Muroidea</taxon>
        <taxon>Muridae</taxon>
        <taxon>Murinae</taxon>
        <taxon>Mus</taxon>
        <taxon>Mus</taxon>
    </lineage>
</organism>
<gene>
    <name type="primary">Srrd</name>
</gene>
<accession>Q8K2M3</accession>
<accession>Q08AU8</accession>
<accession>Q9CSK3</accession>
<name>SRR1L_MOUSE</name>
<sequence length="249" mass="27502">MAAAALEPWSAVAPRRRKRAAGRRPRPGEGPRAEPEADGEAVLRRLREAEEDLRISDFCSSALETITECLRKQLEQLQPLTEALGRLHLGSSLPSASQEPLASSASHVKCVCYGLGTFASCPTARIQLAFMLLFLEKCQVPRSHCWVYDPLFSQTEVSVLTSLGVTVLSENEEGKRSVQGQPTVFYMPHCGTALYNNLLWSNWSADALSRVLIIGNSFRGLEERLLARILQENYPYIAKVSDRIAGPGF</sequence>
<reference key="1">
    <citation type="journal article" date="2009" name="PLoS Biol.">
        <title>Lineage-specific biology revealed by a finished genome assembly of the mouse.</title>
        <authorList>
            <person name="Church D.M."/>
            <person name="Goodstadt L."/>
            <person name="Hillier L.W."/>
            <person name="Zody M.C."/>
            <person name="Goldstein S."/>
            <person name="She X."/>
            <person name="Bult C.J."/>
            <person name="Agarwala R."/>
            <person name="Cherry J.L."/>
            <person name="DiCuccio M."/>
            <person name="Hlavina W."/>
            <person name="Kapustin Y."/>
            <person name="Meric P."/>
            <person name="Maglott D."/>
            <person name="Birtle Z."/>
            <person name="Marques A.C."/>
            <person name="Graves T."/>
            <person name="Zhou S."/>
            <person name="Teague B."/>
            <person name="Potamousis K."/>
            <person name="Churas C."/>
            <person name="Place M."/>
            <person name="Herschleb J."/>
            <person name="Runnheim R."/>
            <person name="Forrest D."/>
            <person name="Amos-Landgraf J."/>
            <person name="Schwartz D.C."/>
            <person name="Cheng Z."/>
            <person name="Lindblad-Toh K."/>
            <person name="Eichler E.E."/>
            <person name="Ponting C.P."/>
        </authorList>
    </citation>
    <scope>NUCLEOTIDE SEQUENCE [LARGE SCALE GENOMIC DNA]</scope>
    <source>
        <strain>C57BL/6J</strain>
    </source>
</reference>
<reference key="2">
    <citation type="journal article" date="2004" name="Genome Res.">
        <title>The status, quality, and expansion of the NIH full-length cDNA project: the Mammalian Gene Collection (MGC).</title>
        <authorList>
            <consortium name="The MGC Project Team"/>
        </authorList>
    </citation>
    <scope>NUCLEOTIDE SEQUENCE [LARGE SCALE MRNA] (ISOFORM 2)</scope>
    <scope>NUCLEOTIDE SEQUENCE [LARGE SCALE MRNA] OF 126-249 (ISOFORM 1)</scope>
    <source>
        <tissue>Mammary gland</tissue>
    </source>
</reference>
<reference key="3">
    <citation type="journal article" date="2005" name="Science">
        <title>The transcriptional landscape of the mammalian genome.</title>
        <authorList>
            <person name="Carninci P."/>
            <person name="Kasukawa T."/>
            <person name="Katayama S."/>
            <person name="Gough J."/>
            <person name="Frith M.C."/>
            <person name="Maeda N."/>
            <person name="Oyama R."/>
            <person name="Ravasi T."/>
            <person name="Lenhard B."/>
            <person name="Wells C."/>
            <person name="Kodzius R."/>
            <person name="Shimokawa K."/>
            <person name="Bajic V.B."/>
            <person name="Brenner S.E."/>
            <person name="Batalov S."/>
            <person name="Forrest A.R."/>
            <person name="Zavolan M."/>
            <person name="Davis M.J."/>
            <person name="Wilming L.G."/>
            <person name="Aidinis V."/>
            <person name="Allen J.E."/>
            <person name="Ambesi-Impiombato A."/>
            <person name="Apweiler R."/>
            <person name="Aturaliya R.N."/>
            <person name="Bailey T.L."/>
            <person name="Bansal M."/>
            <person name="Baxter L."/>
            <person name="Beisel K.W."/>
            <person name="Bersano T."/>
            <person name="Bono H."/>
            <person name="Chalk A.M."/>
            <person name="Chiu K.P."/>
            <person name="Choudhary V."/>
            <person name="Christoffels A."/>
            <person name="Clutterbuck D.R."/>
            <person name="Crowe M.L."/>
            <person name="Dalla E."/>
            <person name="Dalrymple B.P."/>
            <person name="de Bono B."/>
            <person name="Della Gatta G."/>
            <person name="di Bernardo D."/>
            <person name="Down T."/>
            <person name="Engstrom P."/>
            <person name="Fagiolini M."/>
            <person name="Faulkner G."/>
            <person name="Fletcher C.F."/>
            <person name="Fukushima T."/>
            <person name="Furuno M."/>
            <person name="Futaki S."/>
            <person name="Gariboldi M."/>
            <person name="Georgii-Hemming P."/>
            <person name="Gingeras T.R."/>
            <person name="Gojobori T."/>
            <person name="Green R.E."/>
            <person name="Gustincich S."/>
            <person name="Harbers M."/>
            <person name="Hayashi Y."/>
            <person name="Hensch T.K."/>
            <person name="Hirokawa N."/>
            <person name="Hill D."/>
            <person name="Huminiecki L."/>
            <person name="Iacono M."/>
            <person name="Ikeo K."/>
            <person name="Iwama A."/>
            <person name="Ishikawa T."/>
            <person name="Jakt M."/>
            <person name="Kanapin A."/>
            <person name="Katoh M."/>
            <person name="Kawasawa Y."/>
            <person name="Kelso J."/>
            <person name="Kitamura H."/>
            <person name="Kitano H."/>
            <person name="Kollias G."/>
            <person name="Krishnan S.P."/>
            <person name="Kruger A."/>
            <person name="Kummerfeld S.K."/>
            <person name="Kurochkin I.V."/>
            <person name="Lareau L.F."/>
            <person name="Lazarevic D."/>
            <person name="Lipovich L."/>
            <person name="Liu J."/>
            <person name="Liuni S."/>
            <person name="McWilliam S."/>
            <person name="Madan Babu M."/>
            <person name="Madera M."/>
            <person name="Marchionni L."/>
            <person name="Matsuda H."/>
            <person name="Matsuzawa S."/>
            <person name="Miki H."/>
            <person name="Mignone F."/>
            <person name="Miyake S."/>
            <person name="Morris K."/>
            <person name="Mottagui-Tabar S."/>
            <person name="Mulder N."/>
            <person name="Nakano N."/>
            <person name="Nakauchi H."/>
            <person name="Ng P."/>
            <person name="Nilsson R."/>
            <person name="Nishiguchi S."/>
            <person name="Nishikawa S."/>
            <person name="Nori F."/>
            <person name="Ohara O."/>
            <person name="Okazaki Y."/>
            <person name="Orlando V."/>
            <person name="Pang K.C."/>
            <person name="Pavan W.J."/>
            <person name="Pavesi G."/>
            <person name="Pesole G."/>
            <person name="Petrovsky N."/>
            <person name="Piazza S."/>
            <person name="Reed J."/>
            <person name="Reid J.F."/>
            <person name="Ring B.Z."/>
            <person name="Ringwald M."/>
            <person name="Rost B."/>
            <person name="Ruan Y."/>
            <person name="Salzberg S.L."/>
            <person name="Sandelin A."/>
            <person name="Schneider C."/>
            <person name="Schoenbach C."/>
            <person name="Sekiguchi K."/>
            <person name="Semple C.A."/>
            <person name="Seno S."/>
            <person name="Sessa L."/>
            <person name="Sheng Y."/>
            <person name="Shibata Y."/>
            <person name="Shimada H."/>
            <person name="Shimada K."/>
            <person name="Silva D."/>
            <person name="Sinclair B."/>
            <person name="Sperling S."/>
            <person name="Stupka E."/>
            <person name="Sugiura K."/>
            <person name="Sultana R."/>
            <person name="Takenaka Y."/>
            <person name="Taki K."/>
            <person name="Tammoja K."/>
            <person name="Tan S.L."/>
            <person name="Tang S."/>
            <person name="Taylor M.S."/>
            <person name="Tegner J."/>
            <person name="Teichmann S.A."/>
            <person name="Ueda H.R."/>
            <person name="van Nimwegen E."/>
            <person name="Verardo R."/>
            <person name="Wei C.L."/>
            <person name="Yagi K."/>
            <person name="Yamanishi H."/>
            <person name="Zabarovsky E."/>
            <person name="Zhu S."/>
            <person name="Zimmer A."/>
            <person name="Hide W."/>
            <person name="Bult C."/>
            <person name="Grimmond S.M."/>
            <person name="Teasdale R.D."/>
            <person name="Liu E.T."/>
            <person name="Brusic V."/>
            <person name="Quackenbush J."/>
            <person name="Wahlestedt C."/>
            <person name="Mattick J.S."/>
            <person name="Hume D.A."/>
            <person name="Kai C."/>
            <person name="Sasaki D."/>
            <person name="Tomaru Y."/>
            <person name="Fukuda S."/>
            <person name="Kanamori-Katayama M."/>
            <person name="Suzuki M."/>
            <person name="Aoki J."/>
            <person name="Arakawa T."/>
            <person name="Iida J."/>
            <person name="Imamura K."/>
            <person name="Itoh M."/>
            <person name="Kato T."/>
            <person name="Kawaji H."/>
            <person name="Kawagashira N."/>
            <person name="Kawashima T."/>
            <person name="Kojima M."/>
            <person name="Kondo S."/>
            <person name="Konno H."/>
            <person name="Nakano K."/>
            <person name="Ninomiya N."/>
            <person name="Nishio T."/>
            <person name="Okada M."/>
            <person name="Plessy C."/>
            <person name="Shibata K."/>
            <person name="Shiraki T."/>
            <person name="Suzuki S."/>
            <person name="Tagami M."/>
            <person name="Waki K."/>
            <person name="Watahiki A."/>
            <person name="Okamura-Oho Y."/>
            <person name="Suzuki H."/>
            <person name="Kawai J."/>
            <person name="Hayashizaki Y."/>
        </authorList>
    </citation>
    <scope>NUCLEOTIDE SEQUENCE [LARGE SCALE MRNA] OF 7-249 (ISOFORM 1)</scope>
    <source>
        <strain>C57BL/6J</strain>
        <tissue>Embryo</tissue>
    </source>
</reference>
<reference key="4">
    <citation type="journal article" date="2017" name="Arch. Biochem. Biophys.">
        <title>The novel heme-dependent inducible protein, SRRD regulates heme biosynthesis and circadian rhythms.</title>
        <authorList>
            <person name="Adachi Y."/>
            <person name="Umeda M."/>
            <person name="Kawazoe A."/>
            <person name="Sato T."/>
            <person name="Ohkawa Y."/>
            <person name="Kitajima S."/>
            <person name="Izawa S."/>
            <person name="Sagami I."/>
            <person name="Taketani S."/>
        </authorList>
    </citation>
    <scope>FUNCTION</scope>
    <scope>INDUCTION</scope>
    <scope>SUBCELLULAR LOCATION</scope>
</reference>
<evidence type="ECO:0000256" key="1">
    <source>
        <dbReference type="SAM" id="MobiDB-lite"/>
    </source>
</evidence>
<evidence type="ECO:0000269" key="2">
    <source>
    </source>
</evidence>
<evidence type="ECO:0000303" key="3">
    <source>
    </source>
</evidence>
<evidence type="ECO:0000305" key="4"/>